<accession>A8EY51</accession>
<name>RS21_RICCK</name>
<sequence>MILVNVHAGNCDNTLKNFKKKLQRELYFRKMKEQRYYETPSAKRVRKAQEAARRQRKFARKKMFDE</sequence>
<organism>
    <name type="scientific">Rickettsia canadensis (strain McKiel)</name>
    <dbReference type="NCBI Taxonomy" id="293613"/>
    <lineage>
        <taxon>Bacteria</taxon>
        <taxon>Pseudomonadati</taxon>
        <taxon>Pseudomonadota</taxon>
        <taxon>Alphaproteobacteria</taxon>
        <taxon>Rickettsiales</taxon>
        <taxon>Rickettsiaceae</taxon>
        <taxon>Rickettsieae</taxon>
        <taxon>Rickettsia</taxon>
        <taxon>belli group</taxon>
    </lineage>
</organism>
<proteinExistence type="inferred from homology"/>
<evidence type="ECO:0000255" key="1">
    <source>
        <dbReference type="HAMAP-Rule" id="MF_00358"/>
    </source>
</evidence>
<evidence type="ECO:0000305" key="2"/>
<protein>
    <recommendedName>
        <fullName evidence="1">Small ribosomal subunit protein bS21</fullName>
    </recommendedName>
    <alternativeName>
        <fullName evidence="2">30S ribosomal protein S21</fullName>
    </alternativeName>
</protein>
<keyword id="KW-0687">Ribonucleoprotein</keyword>
<keyword id="KW-0689">Ribosomal protein</keyword>
<feature type="chain" id="PRO_1000005165" description="Small ribosomal subunit protein bS21">
    <location>
        <begin position="1"/>
        <end position="66"/>
    </location>
</feature>
<comment type="similarity">
    <text evidence="1">Belongs to the bacterial ribosomal protein bS21 family.</text>
</comment>
<gene>
    <name evidence="1" type="primary">rpsU</name>
    <name type="ordered locus">A1E_01695</name>
</gene>
<dbReference type="EMBL" id="CP000409">
    <property type="protein sequence ID" value="ABV73284.1"/>
    <property type="molecule type" value="Genomic_DNA"/>
</dbReference>
<dbReference type="RefSeq" id="WP_012148483.1">
    <property type="nucleotide sequence ID" value="NC_009879.1"/>
</dbReference>
<dbReference type="SMR" id="A8EY51"/>
<dbReference type="STRING" id="293613.A1E_01695"/>
<dbReference type="GeneID" id="79937617"/>
<dbReference type="KEGG" id="rcm:A1E_01695"/>
<dbReference type="eggNOG" id="COG0828">
    <property type="taxonomic scope" value="Bacteria"/>
</dbReference>
<dbReference type="HOGENOM" id="CLU_159258_0_2_5"/>
<dbReference type="Proteomes" id="UP000007056">
    <property type="component" value="Chromosome"/>
</dbReference>
<dbReference type="GO" id="GO:1990904">
    <property type="term" value="C:ribonucleoprotein complex"/>
    <property type="evidence" value="ECO:0007669"/>
    <property type="project" value="UniProtKB-KW"/>
</dbReference>
<dbReference type="GO" id="GO:0005840">
    <property type="term" value="C:ribosome"/>
    <property type="evidence" value="ECO:0007669"/>
    <property type="project" value="UniProtKB-KW"/>
</dbReference>
<dbReference type="GO" id="GO:0003735">
    <property type="term" value="F:structural constituent of ribosome"/>
    <property type="evidence" value="ECO:0007669"/>
    <property type="project" value="InterPro"/>
</dbReference>
<dbReference type="GO" id="GO:0006412">
    <property type="term" value="P:translation"/>
    <property type="evidence" value="ECO:0007669"/>
    <property type="project" value="UniProtKB-UniRule"/>
</dbReference>
<dbReference type="Gene3D" id="1.20.5.1150">
    <property type="entry name" value="Ribosomal protein S8"/>
    <property type="match status" value="1"/>
</dbReference>
<dbReference type="HAMAP" id="MF_00358">
    <property type="entry name" value="Ribosomal_bS21"/>
    <property type="match status" value="1"/>
</dbReference>
<dbReference type="InterPro" id="IPR001911">
    <property type="entry name" value="Ribosomal_bS21"/>
</dbReference>
<dbReference type="InterPro" id="IPR038380">
    <property type="entry name" value="Ribosomal_bS21_sf"/>
</dbReference>
<dbReference type="NCBIfam" id="TIGR00030">
    <property type="entry name" value="S21p"/>
    <property type="match status" value="1"/>
</dbReference>
<dbReference type="Pfam" id="PF01165">
    <property type="entry name" value="Ribosomal_S21"/>
    <property type="match status" value="1"/>
</dbReference>
<reference key="1">
    <citation type="submission" date="2007-09" db="EMBL/GenBank/DDBJ databases">
        <title>Complete genome sequence of Rickettsia canadensis.</title>
        <authorList>
            <person name="Madan A."/>
            <person name="Fahey J."/>
            <person name="Helton E."/>
            <person name="Ketteman M."/>
            <person name="Madan A."/>
            <person name="Rodrigues S."/>
            <person name="Sanchez A."/>
            <person name="Whiting M."/>
            <person name="Dasch G."/>
            <person name="Eremeeva M."/>
        </authorList>
    </citation>
    <scope>NUCLEOTIDE SEQUENCE [LARGE SCALE GENOMIC DNA]</scope>
    <source>
        <strain>McKiel</strain>
    </source>
</reference>